<protein>
    <recommendedName>
        <fullName evidence="1">Maturase K</fullName>
    </recommendedName>
    <alternativeName>
        <fullName evidence="1">Intron maturase</fullName>
    </alternativeName>
</protein>
<proteinExistence type="inferred from homology"/>
<organism>
    <name type="scientific">Stewartia pseudocamellia</name>
    <name type="common">Japanese stewartia</name>
    <name type="synonym">Stewartia koreana</name>
    <dbReference type="NCBI Taxonomy" id="59679"/>
    <lineage>
        <taxon>Eukaryota</taxon>
        <taxon>Viridiplantae</taxon>
        <taxon>Streptophyta</taxon>
        <taxon>Embryophyta</taxon>
        <taxon>Tracheophyta</taxon>
        <taxon>Spermatophyta</taxon>
        <taxon>Magnoliopsida</taxon>
        <taxon>eudicotyledons</taxon>
        <taxon>Gunneridae</taxon>
        <taxon>Pentapetalae</taxon>
        <taxon>asterids</taxon>
        <taxon>Ericales</taxon>
        <taxon>Theaceae</taxon>
        <taxon>Stewartia</taxon>
    </lineage>
</organism>
<sequence length="508" mass="60412">MEEFKRYLELDRSQQHDFVYPLIFQEYIYALAHDHGLNRSILLENIGYDNKSSLLIVKRLITHLITQMYQQNHFLFSANDSNQNPFLGHNTNLYFQMILEGFAVVVEIPFSLRLRFSLEGKEIVKSQNLRSIHSIFPFLEDKFSHLNYVLDILIPHSIHLEILVQTLRYWVKDASSLYLLRFFLHEYRNWNSLITPKKSSFSFSKRNQRLFLFLYNFHICEYESIFVFLRNQSSHLRSISSGTFLERRYFYEKIEHFVEVFTKDFQAILWFFKDPFIHYVRYQGKSILASKGTSLLMNKWRYYLVNFWQCYFYIWSQPGRIHINQLSKHSLDFLGYLSSVRLNPSMVRSQMLENSFLIGNAIKKFDTIVPIIPMIGSLSKAKFCNVLGHPISKPVWADLSDSDIIDRFGRIYRNLSHYHSGSSKKTSLYRIKYILRLSCARTLARKHKSTVRAFLKRLGSELLEEFFTGEEQVFSLTFPKASSTSRGLYRRRIWYLDIICINDLANHE</sequence>
<gene>
    <name evidence="1" type="primary">matK</name>
</gene>
<reference key="1">
    <citation type="journal article" date="2001" name="Am. J. Bot.">
        <title>Phylogenetic relationships of Theaceae inferred from chloroplast DNA sequence data.</title>
        <authorList>
            <person name="Prince L.M."/>
            <person name="Parks C.R."/>
        </authorList>
    </citation>
    <scope>NUCLEOTIDE SEQUENCE [GENOMIC DNA]</scope>
    <source>
        <tissue>Leaf</tissue>
    </source>
</reference>
<evidence type="ECO:0000255" key="1">
    <source>
        <dbReference type="HAMAP-Rule" id="MF_01390"/>
    </source>
</evidence>
<geneLocation type="chloroplast"/>
<name>MATK_STEPS</name>
<accession>Q8WIT2</accession>
<feature type="chain" id="PRO_0000143724" description="Maturase K">
    <location>
        <begin position="1"/>
        <end position="508"/>
    </location>
</feature>
<comment type="function">
    <text evidence="1">Usually encoded in the trnK tRNA gene intron. Probably assists in splicing its own and other chloroplast group II introns.</text>
</comment>
<comment type="subcellular location">
    <subcellularLocation>
        <location>Plastid</location>
        <location>Chloroplast</location>
    </subcellularLocation>
</comment>
<comment type="similarity">
    <text evidence="1">Belongs to the intron maturase 2 family. MatK subfamily.</text>
</comment>
<dbReference type="EMBL" id="AF380104">
    <property type="protein sequence ID" value="AAL60400.1"/>
    <property type="molecule type" value="Genomic_DNA"/>
</dbReference>
<dbReference type="GO" id="GO:0009507">
    <property type="term" value="C:chloroplast"/>
    <property type="evidence" value="ECO:0007669"/>
    <property type="project" value="UniProtKB-SubCell"/>
</dbReference>
<dbReference type="GO" id="GO:0003723">
    <property type="term" value="F:RNA binding"/>
    <property type="evidence" value="ECO:0007669"/>
    <property type="project" value="UniProtKB-KW"/>
</dbReference>
<dbReference type="GO" id="GO:0006397">
    <property type="term" value="P:mRNA processing"/>
    <property type="evidence" value="ECO:0007669"/>
    <property type="project" value="UniProtKB-KW"/>
</dbReference>
<dbReference type="GO" id="GO:0008380">
    <property type="term" value="P:RNA splicing"/>
    <property type="evidence" value="ECO:0007669"/>
    <property type="project" value="UniProtKB-UniRule"/>
</dbReference>
<dbReference type="GO" id="GO:0008033">
    <property type="term" value="P:tRNA processing"/>
    <property type="evidence" value="ECO:0007669"/>
    <property type="project" value="UniProtKB-KW"/>
</dbReference>
<dbReference type="HAMAP" id="MF_01390">
    <property type="entry name" value="MatK"/>
    <property type="match status" value="1"/>
</dbReference>
<dbReference type="InterPro" id="IPR024937">
    <property type="entry name" value="Domain_X"/>
</dbReference>
<dbReference type="InterPro" id="IPR002866">
    <property type="entry name" value="Maturase_MatK"/>
</dbReference>
<dbReference type="InterPro" id="IPR024942">
    <property type="entry name" value="Maturase_MatK_N"/>
</dbReference>
<dbReference type="PANTHER" id="PTHR34811">
    <property type="entry name" value="MATURASE K"/>
    <property type="match status" value="1"/>
</dbReference>
<dbReference type="PANTHER" id="PTHR34811:SF1">
    <property type="entry name" value="MATURASE K"/>
    <property type="match status" value="1"/>
</dbReference>
<dbReference type="Pfam" id="PF01348">
    <property type="entry name" value="Intron_maturas2"/>
    <property type="match status" value="1"/>
</dbReference>
<dbReference type="Pfam" id="PF01824">
    <property type="entry name" value="MatK_N"/>
    <property type="match status" value="1"/>
</dbReference>
<keyword id="KW-0150">Chloroplast</keyword>
<keyword id="KW-0507">mRNA processing</keyword>
<keyword id="KW-0934">Plastid</keyword>
<keyword id="KW-0694">RNA-binding</keyword>
<keyword id="KW-0819">tRNA processing</keyword>